<protein>
    <recommendedName>
        <fullName>Pyruvate, phosphate dikinase, chloroplastic</fullName>
        <ecNumber evidence="2">2.7.9.1</ecNumber>
    </recommendedName>
    <alternativeName>
        <fullName>Pyruvate, orthophosphate dikinase</fullName>
    </alternativeName>
</protein>
<sequence>MMSSLSVEGMLLKSARESCLPARVNQRRNGDLRRLNHHRQSSFVRCLTPARVSRPELRSSGLTPPRAVLNPVSPPVTTAKKRVFTFGKGRSEGNRDMKSLLGGKGANLAEMSSIGLSVPPGLTISTEACEEYQQNGKSLPPGLWDEISEGLDYVQKEMSASLGDPSKPLLLSVRSGAAISMPGMMDTVLNLGLNDEVVAGLAGKSGARFAYDSYRRFLDMFGNVVMGIPHSLFDEKLEQMKAEKGIHLDTDLTAADLKDLVEKYKNVYVEAKGEKFPTDPKKQLELAVNAVFDSWDSPRANKYRSINQITGLKGTAVNIQSMVFGNMGNTSGTGVLFTRNPSTGEKKLYGEFLINAQGEDVVAGIRTPEDLGTMETCMPEAYKELVENCEILERHYKDMMDIEFTVQENRLWMLQCRTGKRTGKGAVRIAVDMVNEGLIDTRTAIKRVETQHLDQLLHPQFEDPSAYKSHVVATGLPASPGAAVGQVCFSAEDAETWHAQGKSAILVRTETSPEDVGGMHAAAGILTARGGMTSHAAVVARGWGKCCVSGCADIRVNDDMKIFTIGDRVIKEGDWLSLNGTTGEVILGKQLLAPPAMSNDLEIFMSWADQARRLKVMANADTPNDALTARNNGAQGIGLCRTEHMFFASDERIKAVRKMIMAVTPEQRKVALDLLLPYQRSDFEGIFRAMDGLPVTIRLLDPPLHEFLPEGDLEHIVNELAVDTGMSADEIYSKIENLSEVNPMLGFRGCRLGISYPELTEMQVRAIFQAAVSMTNQGVTVIPEIMVPLVGTPQELRHQISVIRGVAANVFAEMGVTLEYKVGTMIEIPRAALIAEEIGKEADFFSFGTNDLTQMTFGYSRDDVGKFLQIYLAQGILQHDPFEVIDQKGVGQLIKMATEKGRAANPSLKVGICGEHGGEPSSVAFFDGVGLDYVSCSPFRVPIARLAAAQVIV</sequence>
<evidence type="ECO:0000250" key="1"/>
<evidence type="ECO:0000250" key="2">
    <source>
        <dbReference type="UniProtKB" id="P11155"/>
    </source>
</evidence>
<evidence type="ECO:0000256" key="3">
    <source>
        <dbReference type="SAM" id="MobiDB-lite"/>
    </source>
</evidence>
<evidence type="ECO:0000269" key="4">
    <source>
    </source>
</evidence>
<evidence type="ECO:0000305" key="5"/>
<evidence type="ECO:0007829" key="6">
    <source>
        <dbReference type="PDB" id="5JVJ"/>
    </source>
</evidence>
<evidence type="ECO:0007829" key="7">
    <source>
        <dbReference type="PDB" id="5JVL"/>
    </source>
</evidence>
<proteinExistence type="evidence at protein level"/>
<organism>
    <name type="scientific">Flaveria trinervia</name>
    <name type="common">Clustered yellowtops</name>
    <name type="synonym">Oedera trinervia</name>
    <dbReference type="NCBI Taxonomy" id="4227"/>
    <lineage>
        <taxon>Eukaryota</taxon>
        <taxon>Viridiplantae</taxon>
        <taxon>Streptophyta</taxon>
        <taxon>Embryophyta</taxon>
        <taxon>Tracheophyta</taxon>
        <taxon>Spermatophyta</taxon>
        <taxon>Magnoliopsida</taxon>
        <taxon>eudicotyledons</taxon>
        <taxon>Gunneridae</taxon>
        <taxon>Pentapetalae</taxon>
        <taxon>asterids</taxon>
        <taxon>campanulids</taxon>
        <taxon>Asterales</taxon>
        <taxon>Asteraceae</taxon>
        <taxon>Asteroideae</taxon>
        <taxon>Heliantheae alliance</taxon>
        <taxon>Tageteae</taxon>
        <taxon>Flaveria</taxon>
    </lineage>
</organism>
<comment type="function">
    <text>Formation of phosphoenolpyruvate, which is the primary acceptor of CO(2) in C4 and some Crassulacean acid metabolism plants.</text>
</comment>
<comment type="catalytic activity">
    <reaction>
        <text>pyruvate + phosphate + ATP = phosphoenolpyruvate + AMP + diphosphate + H(+)</text>
        <dbReference type="Rhea" id="RHEA:10756"/>
        <dbReference type="ChEBI" id="CHEBI:15361"/>
        <dbReference type="ChEBI" id="CHEBI:15378"/>
        <dbReference type="ChEBI" id="CHEBI:30616"/>
        <dbReference type="ChEBI" id="CHEBI:33019"/>
        <dbReference type="ChEBI" id="CHEBI:43474"/>
        <dbReference type="ChEBI" id="CHEBI:58702"/>
        <dbReference type="ChEBI" id="CHEBI:456215"/>
        <dbReference type="EC" id="2.7.9.1"/>
    </reaction>
</comment>
<comment type="cofactor">
    <cofactor evidence="2">
        <name>Mg(2+)</name>
        <dbReference type="ChEBI" id="CHEBI:18420"/>
    </cofactor>
</comment>
<comment type="activity regulation">
    <text evidence="1">Activated by light-induced dephosphorylation. Inhibited by dark-induced phosphorylation. Both reactions are catalyzed by PDRP1 (By similarity).</text>
</comment>
<comment type="pathway">
    <text>Photosynthesis; C4 acid pathway.</text>
</comment>
<comment type="subunit">
    <text evidence="1">Homotetramer.</text>
</comment>
<comment type="subcellular location">
    <subcellularLocation>
        <location evidence="4">Plastid</location>
        <location evidence="4">Chloroplast</location>
    </subcellularLocation>
    <subcellularLocation>
        <location evidence="4">Cytoplasm</location>
    </subcellularLocation>
    <text>Isoform 1 is targeted to the chloroplast while isoform 2 is found in the cytoplasm.</text>
</comment>
<comment type="alternative products">
    <event type="alternative promoter"/>
    <isoform>
        <id>P22221-1</id>
        <name>1</name>
        <sequence type="displayed"/>
    </isoform>
    <isoform>
        <id>P22221-4</id>
        <name>2</name>
        <sequence type="described" ref="VSP_034607 VSP_034608"/>
    </isoform>
</comment>
<comment type="tissue specificity">
    <text evidence="4">Isoform 1 mainly localized in mesophyll cells and only a low level is found in bundle sheath cells. Isoform 2 is expressed in roots and stems.</text>
</comment>
<comment type="induction">
    <molecule>Isoform 1</molecule>
    <text evidence="4">Light-inducible.</text>
</comment>
<comment type="induction">
    <molecule>Isoform 2</molecule>
    <text evidence="4">Dark-inducible.</text>
</comment>
<comment type="domain">
    <text evidence="1">The N-terminal domain contains the ATP/Pi binding site, the central domain the pyrophosphate/phosphate carrier histidine, and the C-terminal domain the pyruvate binding site.</text>
</comment>
<comment type="PTM">
    <text evidence="1">Phosphorylation of Thr-533 in the dark inactivates the enzyme. Dephosphorylation upon light stimulation reactivates the enzyme (By similarity).</text>
</comment>
<comment type="miscellaneous">
    <text evidence="1">The reaction takes place in three steps, mediated by a phosphocarrier histidine residue located on the surface of the central domain. The two first partial reactions are catalyzed at an active site located on the N-terminal domain, and the third partial reaction is catalyzed at an active site located on the C-terminal domain. For catalytic turnover, the central domain swivels from the concave surface of the N-terminal domain to that of the C-terminal domain (By similarity).</text>
</comment>
<comment type="miscellaneous">
    <molecule>Isoform 2</molecule>
    <text evidence="5">Produced by alternative promoter usage. Cytoplasmic.</text>
</comment>
<comment type="similarity">
    <text evidence="5">Belongs to the PEP-utilizing enzyme family.</text>
</comment>
<comment type="sequence caution" evidence="5">
    <conflict type="erroneous gene model prediction">
        <sequence resource="EMBL-CDS" id="CAA55702"/>
    </conflict>
</comment>
<comment type="sequence caution" evidence="5">
    <conflict type="erroneous gene model prediction">
        <sequence resource="EMBL-CDS" id="CAA55703"/>
    </conflict>
</comment>
<feature type="transit peptide" description="Chloroplast" evidence="1">
    <location>
        <begin position="1"/>
        <end position="77"/>
    </location>
</feature>
<feature type="chain" id="PRO_0000023562" description="Pyruvate, phosphate dikinase, chloroplastic">
    <location>
        <begin position="78"/>
        <end position="953"/>
    </location>
</feature>
<feature type="region of interest" description="Disordered" evidence="3">
    <location>
        <begin position="55"/>
        <end position="74"/>
    </location>
</feature>
<feature type="active site" description="Tele-phosphohistidine intermediate" evidence="2">
    <location>
        <position position="535"/>
    </location>
</feature>
<feature type="active site" description="Proton donor" evidence="2">
    <location>
        <position position="913"/>
    </location>
</feature>
<feature type="binding site" evidence="2">
    <location>
        <position position="641"/>
    </location>
    <ligand>
        <name>substrate</name>
    </ligand>
</feature>
<feature type="binding site" evidence="2">
    <location>
        <position position="698"/>
    </location>
    <ligand>
        <name>substrate</name>
    </ligand>
</feature>
<feature type="binding site" evidence="2">
    <location>
        <position position="827"/>
    </location>
    <ligand>
        <name>Mg(2+)</name>
        <dbReference type="ChEBI" id="CHEBI:18420"/>
    </ligand>
</feature>
<feature type="binding site" evidence="2">
    <location>
        <position position="827"/>
    </location>
    <ligand>
        <name>substrate</name>
    </ligand>
</feature>
<feature type="binding site" evidence="2">
    <location>
        <position position="848"/>
    </location>
    <ligand>
        <name>substrate</name>
    </ligand>
</feature>
<feature type="binding site" evidence="2">
    <location>
        <position position="849"/>
    </location>
    <ligand>
        <name>substrate</name>
    </ligand>
</feature>
<feature type="binding site" evidence="2">
    <location>
        <position position="850"/>
    </location>
    <ligand>
        <name>substrate</name>
    </ligand>
</feature>
<feature type="binding site" evidence="2">
    <location>
        <position position="851"/>
    </location>
    <ligand>
        <name>Mg(2+)</name>
        <dbReference type="ChEBI" id="CHEBI:18420"/>
    </ligand>
</feature>
<feature type="binding site" evidence="2">
    <location>
        <position position="851"/>
    </location>
    <ligand>
        <name>substrate</name>
    </ligand>
</feature>
<feature type="modified residue" description="Phosphothreonine; by PDRP1" evidence="1">
    <location>
        <position position="533"/>
    </location>
</feature>
<feature type="splice variant" id="VSP_034607" description="In isoform 2." evidence="5">
    <location>
        <begin position="1"/>
        <end position="79"/>
    </location>
</feature>
<feature type="splice variant" id="VSP_034608" description="In isoform 2." evidence="5">
    <original>KK</original>
    <variation>MQ</variation>
    <location>
        <begin position="80"/>
        <end position="81"/>
    </location>
</feature>
<feature type="sequence conflict" description="In Ref. 1; CAA40420." evidence="5" ref="1">
    <original>L</original>
    <variation>S</variation>
    <location>
        <position position="143"/>
    </location>
</feature>
<feature type="strand" evidence="6">
    <location>
        <begin position="82"/>
        <end position="87"/>
    </location>
</feature>
<feature type="strand" evidence="6">
    <location>
        <begin position="90"/>
        <end position="93"/>
    </location>
</feature>
<feature type="turn" evidence="6">
    <location>
        <begin position="98"/>
        <end position="100"/>
    </location>
</feature>
<feature type="helix" evidence="6">
    <location>
        <begin position="103"/>
        <end position="113"/>
    </location>
</feature>
<feature type="strand" evidence="6">
    <location>
        <begin position="121"/>
        <end position="124"/>
    </location>
</feature>
<feature type="helix" evidence="6">
    <location>
        <begin position="126"/>
        <end position="134"/>
    </location>
</feature>
<feature type="helix" evidence="6">
    <location>
        <begin position="143"/>
        <end position="158"/>
    </location>
</feature>
<feature type="strand" evidence="7">
    <location>
        <begin position="161"/>
        <end position="163"/>
    </location>
</feature>
<feature type="strand" evidence="7">
    <location>
        <begin position="165"/>
        <end position="168"/>
    </location>
</feature>
<feature type="strand" evidence="6">
    <location>
        <begin position="171"/>
        <end position="176"/>
    </location>
</feature>
<feature type="strand" evidence="6">
    <location>
        <begin position="188"/>
        <end position="192"/>
    </location>
</feature>
<feature type="helix" evidence="6">
    <location>
        <begin position="195"/>
        <end position="205"/>
    </location>
</feature>
<feature type="helix" evidence="6">
    <location>
        <begin position="207"/>
        <end position="224"/>
    </location>
</feature>
<feature type="helix" evidence="6">
    <location>
        <begin position="230"/>
        <end position="242"/>
    </location>
</feature>
<feature type="helix" evidence="7">
    <location>
        <begin position="249"/>
        <end position="251"/>
    </location>
</feature>
<feature type="helix" evidence="6">
    <location>
        <begin position="254"/>
        <end position="272"/>
    </location>
</feature>
<feature type="helix" evidence="6">
    <location>
        <begin position="280"/>
        <end position="295"/>
    </location>
</feature>
<feature type="helix" evidence="6">
    <location>
        <begin position="300"/>
        <end position="307"/>
    </location>
</feature>
<feature type="strand" evidence="6">
    <location>
        <begin position="316"/>
        <end position="321"/>
    </location>
</feature>
<feature type="strand" evidence="6">
    <location>
        <begin position="332"/>
        <end position="339"/>
    </location>
</feature>
<feature type="turn" evidence="6">
    <location>
        <begin position="341"/>
        <end position="343"/>
    </location>
</feature>
<feature type="strand" evidence="6">
    <location>
        <begin position="349"/>
        <end position="355"/>
    </location>
</feature>
<feature type="helix" evidence="6">
    <location>
        <begin position="358"/>
        <end position="363"/>
    </location>
</feature>
<feature type="helix" evidence="6">
    <location>
        <begin position="371"/>
        <end position="377"/>
    </location>
</feature>
<feature type="helix" evidence="6">
    <location>
        <begin position="379"/>
        <end position="396"/>
    </location>
</feature>
<feature type="strand" evidence="6">
    <location>
        <begin position="400"/>
        <end position="407"/>
    </location>
</feature>
<feature type="strand" evidence="6">
    <location>
        <begin position="410"/>
        <end position="418"/>
    </location>
</feature>
<feature type="helix" evidence="6">
    <location>
        <begin position="423"/>
        <end position="435"/>
    </location>
</feature>
<feature type="helix" evidence="6">
    <location>
        <begin position="441"/>
        <end position="447"/>
    </location>
</feature>
<feature type="helix" evidence="6">
    <location>
        <begin position="450"/>
        <end position="455"/>
    </location>
</feature>
<feature type="strand" evidence="7">
    <location>
        <begin position="460"/>
        <end position="462"/>
    </location>
</feature>
<feature type="helix" evidence="6">
    <location>
        <begin position="464"/>
        <end position="470"/>
    </location>
</feature>
<feature type="strand" evidence="6">
    <location>
        <begin position="471"/>
        <end position="474"/>
    </location>
</feature>
<feature type="strand" evidence="6">
    <location>
        <begin position="476"/>
        <end position="479"/>
    </location>
</feature>
<feature type="strand" evidence="6">
    <location>
        <begin position="481"/>
        <end position="488"/>
    </location>
</feature>
<feature type="helix" evidence="6">
    <location>
        <begin position="491"/>
        <end position="500"/>
    </location>
</feature>
<feature type="strand" evidence="6">
    <location>
        <begin position="504"/>
        <end position="509"/>
    </location>
</feature>
<feature type="helix" evidence="6">
    <location>
        <begin position="513"/>
        <end position="515"/>
    </location>
</feature>
<feature type="helix" evidence="6">
    <location>
        <begin position="516"/>
        <end position="521"/>
    </location>
</feature>
<feature type="strand" evidence="6">
    <location>
        <begin position="522"/>
        <end position="529"/>
    </location>
</feature>
<feature type="helix" evidence="6">
    <location>
        <begin position="535"/>
        <end position="542"/>
    </location>
</feature>
<feature type="strand" evidence="6">
    <location>
        <begin position="546"/>
        <end position="549"/>
    </location>
</feature>
<feature type="strand" evidence="6">
    <location>
        <begin position="555"/>
        <end position="557"/>
    </location>
</feature>
<feature type="turn" evidence="6">
    <location>
        <begin position="558"/>
        <end position="561"/>
    </location>
</feature>
<feature type="strand" evidence="6">
    <location>
        <begin position="562"/>
        <end position="565"/>
    </location>
</feature>
<feature type="strand" evidence="6">
    <location>
        <begin position="568"/>
        <end position="571"/>
    </location>
</feature>
<feature type="strand" evidence="6">
    <location>
        <begin position="575"/>
        <end position="579"/>
    </location>
</feature>
<feature type="turn" evidence="6">
    <location>
        <begin position="580"/>
        <end position="582"/>
    </location>
</feature>
<feature type="strand" evidence="6">
    <location>
        <begin position="584"/>
        <end position="588"/>
    </location>
</feature>
<feature type="helix" evidence="6">
    <location>
        <begin position="599"/>
        <end position="611"/>
    </location>
</feature>
<feature type="strand" evidence="6">
    <location>
        <begin position="614"/>
        <end position="619"/>
    </location>
</feature>
<feature type="helix" evidence="6">
    <location>
        <begin position="623"/>
        <end position="631"/>
    </location>
</feature>
<feature type="strand" evidence="6">
    <location>
        <begin position="636"/>
        <end position="641"/>
    </location>
</feature>
<feature type="helix" evidence="6">
    <location>
        <begin position="642"/>
        <end position="644"/>
    </location>
</feature>
<feature type="helix" evidence="6">
    <location>
        <begin position="650"/>
        <end position="660"/>
    </location>
</feature>
<feature type="helix" evidence="6">
    <location>
        <begin position="665"/>
        <end position="689"/>
    </location>
</feature>
<feature type="turn" evidence="6">
    <location>
        <begin position="690"/>
        <end position="692"/>
    </location>
</feature>
<feature type="strand" evidence="6">
    <location>
        <begin position="693"/>
        <end position="698"/>
    </location>
</feature>
<feature type="helix" evidence="6">
    <location>
        <begin position="704"/>
        <end position="707"/>
    </location>
</feature>
<feature type="helix" evidence="6">
    <location>
        <begin position="713"/>
        <end position="724"/>
    </location>
</feature>
<feature type="helix" evidence="6">
    <location>
        <begin position="728"/>
        <end position="738"/>
    </location>
</feature>
<feature type="helix" evidence="6">
    <location>
        <begin position="743"/>
        <end position="745"/>
    </location>
</feature>
<feature type="helix" evidence="6">
    <location>
        <begin position="750"/>
        <end position="755"/>
    </location>
</feature>
<feature type="helix" evidence="6">
    <location>
        <begin position="757"/>
        <end position="775"/>
    </location>
</feature>
<feature type="turn" evidence="6">
    <location>
        <begin position="776"/>
        <end position="778"/>
    </location>
</feature>
<feature type="strand" evidence="6">
    <location>
        <begin position="782"/>
        <end position="787"/>
    </location>
</feature>
<feature type="helix" evidence="6">
    <location>
        <begin position="793"/>
        <end position="814"/>
    </location>
</feature>
<feature type="strand" evidence="6">
    <location>
        <begin position="821"/>
        <end position="826"/>
    </location>
</feature>
<feature type="helix" evidence="6">
    <location>
        <begin position="829"/>
        <end position="833"/>
    </location>
</feature>
<feature type="helix" evidence="6">
    <location>
        <begin position="835"/>
        <end position="839"/>
    </location>
</feature>
<feature type="strand" evidence="6">
    <location>
        <begin position="843"/>
        <end position="847"/>
    </location>
</feature>
<feature type="helix" evidence="6">
    <location>
        <begin position="849"/>
        <end position="857"/>
    </location>
</feature>
<feature type="turn" evidence="6">
    <location>
        <begin position="861"/>
        <end position="864"/>
    </location>
</feature>
<feature type="helix" evidence="6">
    <location>
        <begin position="865"/>
        <end position="873"/>
    </location>
</feature>
<feature type="turn" evidence="6">
    <location>
        <begin position="881"/>
        <end position="883"/>
    </location>
</feature>
<feature type="turn" evidence="6">
    <location>
        <begin position="887"/>
        <end position="889"/>
    </location>
</feature>
<feature type="helix" evidence="6">
    <location>
        <begin position="890"/>
        <end position="904"/>
    </location>
</feature>
<feature type="strand" evidence="6">
    <location>
        <begin position="909"/>
        <end position="912"/>
    </location>
</feature>
<feature type="helix" evidence="6">
    <location>
        <begin position="915"/>
        <end position="918"/>
    </location>
</feature>
<feature type="helix" evidence="6">
    <location>
        <begin position="920"/>
        <end position="929"/>
    </location>
</feature>
<feature type="strand" evidence="6">
    <location>
        <begin position="932"/>
        <end position="936"/>
    </location>
</feature>
<feature type="helix" evidence="6">
    <location>
        <begin position="938"/>
        <end position="940"/>
    </location>
</feature>
<feature type="helix" evidence="6">
    <location>
        <begin position="941"/>
        <end position="950"/>
    </location>
</feature>
<accession>P22221</accession>
<accession>Q42738</accession>
<accession>Q42739</accession>
<dbReference type="EC" id="2.7.9.1" evidence="2"/>
<dbReference type="EMBL" id="X57141">
    <property type="protein sequence ID" value="CAA40420.1"/>
    <property type="molecule type" value="mRNA"/>
</dbReference>
<dbReference type="EMBL" id="X79095">
    <property type="protein sequence ID" value="CAA55702.1"/>
    <property type="status" value="ALT_SEQ"/>
    <property type="molecule type" value="Genomic_DNA"/>
</dbReference>
<dbReference type="EMBL" id="X79095">
    <property type="protein sequence ID" value="CAA55703.1"/>
    <property type="status" value="ALT_SEQ"/>
    <property type="molecule type" value="Genomic_DNA"/>
</dbReference>
<dbReference type="PIR" id="S12894">
    <property type="entry name" value="S12894"/>
</dbReference>
<dbReference type="PIR" id="S61410">
    <property type="entry name" value="S61410"/>
</dbReference>
<dbReference type="PDB" id="5JVJ">
    <property type="method" value="X-ray"/>
    <property type="resolution" value="2.90 A"/>
    <property type="chains" value="A/B=80-953"/>
</dbReference>
<dbReference type="PDB" id="5JVL">
    <property type="method" value="X-ray"/>
    <property type="resolution" value="2.90 A"/>
    <property type="chains" value="A/B/C/D=80-953"/>
</dbReference>
<dbReference type="PDB" id="5LU4">
    <property type="method" value="X-ray"/>
    <property type="resolution" value="2.90 A"/>
    <property type="chains" value="A/B=80-953"/>
</dbReference>
<dbReference type="PDBsum" id="5JVJ"/>
<dbReference type="PDBsum" id="5JVL"/>
<dbReference type="PDBsum" id="5LU4"/>
<dbReference type="SMR" id="P22221"/>
<dbReference type="BRENDA" id="2.7.9.1">
    <property type="organism ID" value="2270"/>
</dbReference>
<dbReference type="UniPathway" id="UPA00322"/>
<dbReference type="GO" id="GO:0009507">
    <property type="term" value="C:chloroplast"/>
    <property type="evidence" value="ECO:0007669"/>
    <property type="project" value="UniProtKB-SubCell"/>
</dbReference>
<dbReference type="GO" id="GO:0005524">
    <property type="term" value="F:ATP binding"/>
    <property type="evidence" value="ECO:0007669"/>
    <property type="project" value="UniProtKB-KW"/>
</dbReference>
<dbReference type="GO" id="GO:0016301">
    <property type="term" value="F:kinase activity"/>
    <property type="evidence" value="ECO:0007669"/>
    <property type="project" value="UniProtKB-KW"/>
</dbReference>
<dbReference type="GO" id="GO:0046872">
    <property type="term" value="F:metal ion binding"/>
    <property type="evidence" value="ECO:0007669"/>
    <property type="project" value="UniProtKB-KW"/>
</dbReference>
<dbReference type="GO" id="GO:0050242">
    <property type="term" value="F:pyruvate, phosphate dikinase activity"/>
    <property type="evidence" value="ECO:0007669"/>
    <property type="project" value="UniProtKB-EC"/>
</dbReference>
<dbReference type="GO" id="GO:0015979">
    <property type="term" value="P:photosynthesis"/>
    <property type="evidence" value="ECO:0007669"/>
    <property type="project" value="UniProtKB-KW"/>
</dbReference>
<dbReference type="FunFam" id="3.20.20.60:FF:000040">
    <property type="entry name" value="Pyruvate, phosphate dikinase, chloroplastic"/>
    <property type="match status" value="1"/>
</dbReference>
<dbReference type="FunFam" id="3.30.470.20:FF:000038">
    <property type="entry name" value="Pyruvate, phosphate dikinase, chloroplastic"/>
    <property type="match status" value="1"/>
</dbReference>
<dbReference type="FunFam" id="3.50.30.10:FF:000009">
    <property type="entry name" value="Pyruvate, phosphate dikinase, chloroplastic"/>
    <property type="match status" value="1"/>
</dbReference>
<dbReference type="Gene3D" id="1.20.80.30">
    <property type="match status" value="1"/>
</dbReference>
<dbReference type="Gene3D" id="3.30.1490.20">
    <property type="entry name" value="ATP-grasp fold, A domain"/>
    <property type="match status" value="1"/>
</dbReference>
<dbReference type="Gene3D" id="3.30.470.20">
    <property type="entry name" value="ATP-grasp fold, B domain"/>
    <property type="match status" value="1"/>
</dbReference>
<dbReference type="Gene3D" id="3.20.20.60">
    <property type="entry name" value="Phosphoenolpyruvate-binding domains"/>
    <property type="match status" value="1"/>
</dbReference>
<dbReference type="Gene3D" id="3.50.30.10">
    <property type="entry name" value="Phosphohistidine domain"/>
    <property type="match status" value="1"/>
</dbReference>
<dbReference type="Gene3D" id="1.10.189.10">
    <property type="entry name" value="Pyruvate Phosphate Dikinase, domain 2"/>
    <property type="match status" value="1"/>
</dbReference>
<dbReference type="InterPro" id="IPR013815">
    <property type="entry name" value="ATP_grasp_subdomain_1"/>
</dbReference>
<dbReference type="InterPro" id="IPR008279">
    <property type="entry name" value="PEP-util_enz_mobile_dom"/>
</dbReference>
<dbReference type="InterPro" id="IPR018274">
    <property type="entry name" value="PEP_util_AS"/>
</dbReference>
<dbReference type="InterPro" id="IPR000121">
    <property type="entry name" value="PEP_util_C"/>
</dbReference>
<dbReference type="InterPro" id="IPR023151">
    <property type="entry name" value="PEP_util_CS"/>
</dbReference>
<dbReference type="InterPro" id="IPR036637">
    <property type="entry name" value="Phosphohistidine_dom_sf"/>
</dbReference>
<dbReference type="InterPro" id="IPR002192">
    <property type="entry name" value="PPDK_AMP/ATP-bd"/>
</dbReference>
<dbReference type="InterPro" id="IPR010121">
    <property type="entry name" value="Pyruvate_phosphate_dikinase"/>
</dbReference>
<dbReference type="InterPro" id="IPR015813">
    <property type="entry name" value="Pyrv/PenolPyrv_kinase-like_dom"/>
</dbReference>
<dbReference type="InterPro" id="IPR040442">
    <property type="entry name" value="Pyrv_kinase-like_dom_sf"/>
</dbReference>
<dbReference type="NCBIfam" id="NF004531">
    <property type="entry name" value="PRK05878.1"/>
    <property type="match status" value="1"/>
</dbReference>
<dbReference type="NCBIfam" id="TIGR01828">
    <property type="entry name" value="pyru_phos_dikin"/>
    <property type="match status" value="1"/>
</dbReference>
<dbReference type="PANTHER" id="PTHR22931">
    <property type="entry name" value="PHOSPHOENOLPYRUVATE DIKINASE-RELATED"/>
    <property type="match status" value="1"/>
</dbReference>
<dbReference type="PANTHER" id="PTHR22931:SF9">
    <property type="entry name" value="PYRUVATE, PHOSPHATE DIKINASE 1, CHLOROPLASTIC"/>
    <property type="match status" value="1"/>
</dbReference>
<dbReference type="Pfam" id="PF00391">
    <property type="entry name" value="PEP-utilizers"/>
    <property type="match status" value="1"/>
</dbReference>
<dbReference type="Pfam" id="PF02896">
    <property type="entry name" value="PEP-utilizers_C"/>
    <property type="match status" value="1"/>
</dbReference>
<dbReference type="Pfam" id="PF01326">
    <property type="entry name" value="PPDK_N"/>
    <property type="match status" value="2"/>
</dbReference>
<dbReference type="PIRSF" id="PIRSF000853">
    <property type="entry name" value="PPDK"/>
    <property type="match status" value="1"/>
</dbReference>
<dbReference type="SUPFAM" id="SSF56059">
    <property type="entry name" value="Glutathione synthetase ATP-binding domain-like"/>
    <property type="match status" value="1"/>
</dbReference>
<dbReference type="SUPFAM" id="SSF51621">
    <property type="entry name" value="Phosphoenolpyruvate/pyruvate domain"/>
    <property type="match status" value="1"/>
</dbReference>
<dbReference type="SUPFAM" id="SSF52009">
    <property type="entry name" value="Phosphohistidine domain"/>
    <property type="match status" value="1"/>
</dbReference>
<dbReference type="PROSITE" id="PS00742">
    <property type="entry name" value="PEP_ENZYMES_2"/>
    <property type="match status" value="1"/>
</dbReference>
<dbReference type="PROSITE" id="PS00370">
    <property type="entry name" value="PEP_ENZYMES_PHOS_SITE"/>
    <property type="match status" value="1"/>
</dbReference>
<keyword id="KW-0002">3D-structure</keyword>
<keyword id="KW-0877">Alternative promoter usage</keyword>
<keyword id="KW-0067">ATP-binding</keyword>
<keyword id="KW-0150">Chloroplast</keyword>
<keyword id="KW-0963">Cytoplasm</keyword>
<keyword id="KW-0418">Kinase</keyword>
<keyword id="KW-0460">Magnesium</keyword>
<keyword id="KW-0479">Metal-binding</keyword>
<keyword id="KW-0547">Nucleotide-binding</keyword>
<keyword id="KW-0597">Phosphoprotein</keyword>
<keyword id="KW-0602">Photosynthesis</keyword>
<keyword id="KW-0934">Plastid</keyword>
<keyword id="KW-0670">Pyruvate</keyword>
<keyword id="KW-0808">Transferase</keyword>
<keyword id="KW-0809">Transit peptide</keyword>
<reference key="1">
    <citation type="journal article" date="1990" name="FEBS Lett.">
        <title>Primary structure of pyruvate, orthophosphate dikinase in the dicotyledonous C4 plant Flaveria trinervia.</title>
        <authorList>
            <person name="Rosche E."/>
            <person name="Westhoff P."/>
        </authorList>
    </citation>
    <scope>NUCLEOTIDE SEQUENCE [MRNA] (ISOFORM 1)</scope>
    <source>
        <tissue>Leaf</tissue>
    </source>
</reference>
<reference key="2">
    <citation type="journal article" date="1995" name="Plant Mol. Biol.">
        <title>Genomic structure and expression of the pyruvate, orthophosphate dikinase gene of the dicotyledonous C4 plant Flaveria trinervia (Asteraceae).</title>
        <authorList>
            <person name="Rosche E."/>
            <person name="Westhoff P."/>
        </authorList>
    </citation>
    <scope>NUCLEOTIDE SEQUENCE [GENOMIC DNA]</scope>
    <scope>SUBCELLULAR LOCATION</scope>
    <scope>TISSUE SPECIFICITY</scope>
    <scope>INDUCTION</scope>
    <source>
        <tissue>Leaf</tissue>
    </source>
</reference>
<name>PPDK_FLATR</name>
<gene>
    <name type="primary">PPDK</name>
    <name type="synonym">PDK</name>
</gene>